<comment type="function">
    <text evidence="1">Catalytic subunit of the molybdopterin synthase complex, a complex that catalyzes the conversion of precursor Z into molybdopterin. Acts by mediating the incorporation of 2 sulfur atoms from thiocarboxylated MOCS2A into precursor Z to generate a dithiolene group.</text>
</comment>
<comment type="catalytic activity">
    <reaction evidence="1">
        <text>2 [molybdopterin-synthase sulfur-carrier protein]-C-terminal-Gly-aminoethanethioate + cyclic pyranopterin phosphate + H2O = molybdopterin + 2 [molybdopterin-synthase sulfur-carrier protein]-C-terminal Gly-Gly + 2 H(+)</text>
        <dbReference type="Rhea" id="RHEA:26333"/>
        <dbReference type="Rhea" id="RHEA-COMP:12202"/>
        <dbReference type="Rhea" id="RHEA-COMP:19907"/>
        <dbReference type="ChEBI" id="CHEBI:15377"/>
        <dbReference type="ChEBI" id="CHEBI:15378"/>
        <dbReference type="ChEBI" id="CHEBI:58698"/>
        <dbReference type="ChEBI" id="CHEBI:59648"/>
        <dbReference type="ChEBI" id="CHEBI:90778"/>
        <dbReference type="ChEBI" id="CHEBI:232372"/>
        <dbReference type="EC" id="2.8.1.12"/>
    </reaction>
</comment>
<comment type="pathway">
    <text evidence="1">Cofactor biosynthesis; molybdopterin biosynthesis.</text>
</comment>
<comment type="subunit">
    <text evidence="1">Heterotetramer; composed of 2 small (MOCS2A) and 2 large (MOCS2B) subunits.</text>
</comment>
<comment type="subcellular location">
    <subcellularLocation>
        <location evidence="1">Cytoplasm</location>
        <location evidence="1">Cytosol</location>
    </subcellularLocation>
</comment>
<comment type="miscellaneous">
    <text>This protein is produced by a bicistronic gene which also produces the large subunit (MOCS2A).</text>
</comment>
<comment type="similarity">
    <text evidence="1">Belongs to the MoaE family. MOCS2B subfamily.</text>
</comment>
<feature type="chain" id="PRO_0000369328" description="Molybdopterin synthase catalytic subunit">
    <location>
        <begin position="1"/>
        <end position="155"/>
    </location>
</feature>
<feature type="binding site" evidence="1">
    <location>
        <begin position="109"/>
        <end position="110"/>
    </location>
    <ligand>
        <name>substrate</name>
    </ligand>
</feature>
<feature type="binding site" evidence="1">
    <location>
        <position position="125"/>
    </location>
    <ligand>
        <name>substrate</name>
    </ligand>
</feature>
<feature type="binding site" evidence="1">
    <location>
        <begin position="132"/>
        <end position="134"/>
    </location>
    <ligand>
        <name>substrate</name>
    </ligand>
</feature>
<feature type="sequence conflict" description="In Ref. 1; ACH43861." evidence="2" ref="1">
    <original>A</original>
    <variation>V</variation>
    <location>
        <position position="7"/>
    </location>
</feature>
<evidence type="ECO:0000255" key="1">
    <source>
        <dbReference type="HAMAP-Rule" id="MF_03052"/>
    </source>
</evidence>
<evidence type="ECO:0000305" key="2"/>
<protein>
    <recommendedName>
        <fullName evidence="1">Molybdopterin synthase catalytic subunit</fullName>
        <ecNumber evidence="1">2.8.1.12</ecNumber>
    </recommendedName>
    <alternativeName>
        <fullName evidence="1">Molybdenum cofactor synthesis protein 2 large subunit</fullName>
    </alternativeName>
    <alternativeName>
        <fullName evidence="1">Molybdenum cofactor synthesis protein 2B</fullName>
        <shortName evidence="1">MOCS2B</shortName>
    </alternativeName>
</protein>
<dbReference type="EC" id="2.8.1.12" evidence="1"/>
<dbReference type="EMBL" id="DQ213601">
    <property type="protein sequence ID" value="ACH43860.1"/>
    <property type="molecule type" value="mRNA"/>
</dbReference>
<dbReference type="EMBL" id="DQ213602">
    <property type="protein sequence ID" value="ACH43861.1"/>
    <property type="molecule type" value="mRNA"/>
</dbReference>
<dbReference type="RefSeq" id="NP_001232386.1">
    <property type="nucleotide sequence ID" value="NM_001245457.2"/>
</dbReference>
<dbReference type="RefSeq" id="XP_032599904.2">
    <property type="nucleotide sequence ID" value="XM_032744013.2"/>
</dbReference>
<dbReference type="RefSeq" id="XP_041566949.1">
    <property type="nucleotide sequence ID" value="XM_041711015.1"/>
</dbReference>
<dbReference type="SMR" id="B5FXU9"/>
<dbReference type="STRING" id="59729.ENSTGUP00000021852"/>
<dbReference type="GeneID" id="100190070"/>
<dbReference type="KEGG" id="tgu:100190070"/>
<dbReference type="CTD" id="4338"/>
<dbReference type="HOGENOM" id="CLU_089568_0_1_1"/>
<dbReference type="InParanoid" id="B5FXU9"/>
<dbReference type="OrthoDB" id="5531344at2759"/>
<dbReference type="TreeFam" id="TF314334"/>
<dbReference type="UniPathway" id="UPA00344"/>
<dbReference type="Proteomes" id="UP000007754">
    <property type="component" value="Unplaced"/>
</dbReference>
<dbReference type="GO" id="GO:0005829">
    <property type="term" value="C:cytosol"/>
    <property type="evidence" value="ECO:0000250"/>
    <property type="project" value="UniProtKB"/>
</dbReference>
<dbReference type="GO" id="GO:1990140">
    <property type="term" value="C:molybdopterin synthase complex"/>
    <property type="evidence" value="ECO:0000250"/>
    <property type="project" value="UniProtKB"/>
</dbReference>
<dbReference type="GO" id="GO:0030366">
    <property type="term" value="F:molybdopterin synthase activity"/>
    <property type="evidence" value="ECO:0007669"/>
    <property type="project" value="UniProtKB-UniRule"/>
</dbReference>
<dbReference type="GO" id="GO:0006777">
    <property type="term" value="P:Mo-molybdopterin cofactor biosynthetic process"/>
    <property type="evidence" value="ECO:0000250"/>
    <property type="project" value="UniProtKB"/>
</dbReference>
<dbReference type="CDD" id="cd00756">
    <property type="entry name" value="MoaE"/>
    <property type="match status" value="1"/>
</dbReference>
<dbReference type="FunFam" id="3.90.1170.40:FF:000002">
    <property type="entry name" value="Molybdopterin synthase catalytic subunit"/>
    <property type="match status" value="1"/>
</dbReference>
<dbReference type="Gene3D" id="3.90.1170.40">
    <property type="entry name" value="Molybdopterin biosynthesis MoaE subunit"/>
    <property type="match status" value="1"/>
</dbReference>
<dbReference type="HAMAP" id="MF_03052">
    <property type="entry name" value="MOC2B"/>
    <property type="match status" value="1"/>
</dbReference>
<dbReference type="InterPro" id="IPR036563">
    <property type="entry name" value="MoaE_sf"/>
</dbReference>
<dbReference type="InterPro" id="IPR028888">
    <property type="entry name" value="MOCS2B_euk"/>
</dbReference>
<dbReference type="InterPro" id="IPR003448">
    <property type="entry name" value="Mopterin_biosynth_MoaE"/>
</dbReference>
<dbReference type="PANTHER" id="PTHR23404">
    <property type="entry name" value="MOLYBDOPTERIN SYNTHASE RELATED"/>
    <property type="match status" value="1"/>
</dbReference>
<dbReference type="Pfam" id="PF02391">
    <property type="entry name" value="MoaE"/>
    <property type="match status" value="1"/>
</dbReference>
<dbReference type="SUPFAM" id="SSF54690">
    <property type="entry name" value="Molybdopterin synthase subunit MoaE"/>
    <property type="match status" value="1"/>
</dbReference>
<reference key="1">
    <citation type="journal article" date="2006" name="Proc. Natl. Acad. Sci. U.S.A.">
        <title>A molecular neuroethological approach for identifying and characterizing a cascade of behaviorally regulated genes.</title>
        <authorList>
            <person name="Wada K."/>
            <person name="Howard J.T."/>
            <person name="McConnell P."/>
            <person name="Whitney O."/>
            <person name="Lints T."/>
            <person name="Rivas M.V."/>
            <person name="Horita H."/>
            <person name="Patterson M.A."/>
            <person name="White S.A."/>
            <person name="Scharff C."/>
            <person name="Haesler S."/>
            <person name="Zhao S."/>
            <person name="Sakaguchi H."/>
            <person name="Hagiwara M."/>
            <person name="Shiraki T."/>
            <person name="Hirozane-Kishikawa T."/>
            <person name="Skene P."/>
            <person name="Hayashizaki Y."/>
            <person name="Carninci P."/>
            <person name="Jarvis E.D."/>
        </authorList>
    </citation>
    <scope>NUCLEOTIDE SEQUENCE [LARGE SCALE MRNA]</scope>
    <source>
        <tissue>Brain</tissue>
    </source>
</reference>
<gene>
    <name evidence="1" type="primary">MOCS2</name>
</gene>
<name>MOC2B_TAEGU</name>
<keyword id="KW-0963">Cytoplasm</keyword>
<keyword id="KW-0501">Molybdenum cofactor biosynthesis</keyword>
<keyword id="KW-1185">Reference proteome</keyword>
<keyword id="KW-0808">Transferase</keyword>
<proteinExistence type="evidence at transcript level"/>
<sequence>MEEREDAPKDFIKLKSEKLSVGEVSELVVSPYCGAVSLFIGTTRNNFEGKKVIHLEYEAYTSMAETEMKKICRDVRQKWPSVKHIAVHHRLGVVPITEASVIIAVSSPHRAESLEAVMYCINTLKASVPIWKKEIYEDEYSWKENKECFWANSEK</sequence>
<accession>B5FXU9</accession>
<accession>B5FXV0</accession>
<organism>
    <name type="scientific">Taeniopygia guttata</name>
    <name type="common">Zebra finch</name>
    <name type="synonym">Poephila guttata</name>
    <dbReference type="NCBI Taxonomy" id="59729"/>
    <lineage>
        <taxon>Eukaryota</taxon>
        <taxon>Metazoa</taxon>
        <taxon>Chordata</taxon>
        <taxon>Craniata</taxon>
        <taxon>Vertebrata</taxon>
        <taxon>Euteleostomi</taxon>
        <taxon>Archelosauria</taxon>
        <taxon>Archosauria</taxon>
        <taxon>Dinosauria</taxon>
        <taxon>Saurischia</taxon>
        <taxon>Theropoda</taxon>
        <taxon>Coelurosauria</taxon>
        <taxon>Aves</taxon>
        <taxon>Neognathae</taxon>
        <taxon>Neoaves</taxon>
        <taxon>Telluraves</taxon>
        <taxon>Australaves</taxon>
        <taxon>Passeriformes</taxon>
        <taxon>Passeroidea</taxon>
        <taxon>Estrildidae</taxon>
        <taxon>Estrildinae</taxon>
        <taxon>Taeniopygia</taxon>
    </lineage>
</organism>